<dbReference type="EMBL" id="AE015924">
    <property type="protein sequence ID" value="AAQ65476.1"/>
    <property type="molecule type" value="Genomic_DNA"/>
</dbReference>
<dbReference type="RefSeq" id="WP_005874179.1">
    <property type="nucleotide sequence ID" value="NC_002950.2"/>
</dbReference>
<dbReference type="SMR" id="Q7MXE6"/>
<dbReference type="STRING" id="242619.PG_0253"/>
<dbReference type="EnsemblBacteria" id="AAQ65476">
    <property type="protein sequence ID" value="AAQ65476"/>
    <property type="gene ID" value="PG_0253"/>
</dbReference>
<dbReference type="KEGG" id="pgi:PG_0253"/>
<dbReference type="PATRIC" id="fig|242619.8.peg.233"/>
<dbReference type="eggNOG" id="COG0779">
    <property type="taxonomic scope" value="Bacteria"/>
</dbReference>
<dbReference type="HOGENOM" id="CLU_070525_3_1_10"/>
<dbReference type="BioCyc" id="PGIN242619:G1G02-238-MONOMER"/>
<dbReference type="Proteomes" id="UP000000588">
    <property type="component" value="Chromosome"/>
</dbReference>
<dbReference type="GO" id="GO:0005829">
    <property type="term" value="C:cytosol"/>
    <property type="evidence" value="ECO:0007669"/>
    <property type="project" value="TreeGrafter"/>
</dbReference>
<dbReference type="GO" id="GO:0000028">
    <property type="term" value="P:ribosomal small subunit assembly"/>
    <property type="evidence" value="ECO:0007669"/>
    <property type="project" value="TreeGrafter"/>
</dbReference>
<dbReference type="GO" id="GO:0006412">
    <property type="term" value="P:translation"/>
    <property type="evidence" value="ECO:0007669"/>
    <property type="project" value="TreeGrafter"/>
</dbReference>
<dbReference type="Gene3D" id="3.30.300.70">
    <property type="entry name" value="RimP-like superfamily, N-terminal"/>
    <property type="match status" value="1"/>
</dbReference>
<dbReference type="HAMAP" id="MF_01077">
    <property type="entry name" value="RimP"/>
    <property type="match status" value="1"/>
</dbReference>
<dbReference type="InterPro" id="IPR003728">
    <property type="entry name" value="Ribosome_maturation_RimP"/>
</dbReference>
<dbReference type="InterPro" id="IPR028989">
    <property type="entry name" value="RimP_N"/>
</dbReference>
<dbReference type="InterPro" id="IPR035956">
    <property type="entry name" value="RimP_N_sf"/>
</dbReference>
<dbReference type="NCBIfam" id="NF002531">
    <property type="entry name" value="PRK02001.1"/>
    <property type="match status" value="1"/>
</dbReference>
<dbReference type="PANTHER" id="PTHR33867">
    <property type="entry name" value="RIBOSOME MATURATION FACTOR RIMP"/>
    <property type="match status" value="1"/>
</dbReference>
<dbReference type="PANTHER" id="PTHR33867:SF1">
    <property type="entry name" value="RIBOSOME MATURATION FACTOR RIMP"/>
    <property type="match status" value="1"/>
</dbReference>
<dbReference type="Pfam" id="PF02576">
    <property type="entry name" value="RimP_N"/>
    <property type="match status" value="1"/>
</dbReference>
<dbReference type="SUPFAM" id="SSF75420">
    <property type="entry name" value="YhbC-like, N-terminal domain"/>
    <property type="match status" value="1"/>
</dbReference>
<keyword id="KW-0963">Cytoplasm</keyword>
<keyword id="KW-1185">Reference proteome</keyword>
<keyword id="KW-0690">Ribosome biogenesis</keyword>
<protein>
    <recommendedName>
        <fullName evidence="1">Ribosome maturation factor RimP</fullName>
    </recommendedName>
</protein>
<feature type="chain" id="PRO_0000181901" description="Ribosome maturation factor RimP">
    <location>
        <begin position="1"/>
        <end position="152"/>
    </location>
</feature>
<accession>Q7MXE6</accession>
<organism>
    <name type="scientific">Porphyromonas gingivalis (strain ATCC BAA-308 / W83)</name>
    <dbReference type="NCBI Taxonomy" id="242619"/>
    <lineage>
        <taxon>Bacteria</taxon>
        <taxon>Pseudomonadati</taxon>
        <taxon>Bacteroidota</taxon>
        <taxon>Bacteroidia</taxon>
        <taxon>Bacteroidales</taxon>
        <taxon>Porphyromonadaceae</taxon>
        <taxon>Porphyromonas</taxon>
    </lineage>
</organism>
<reference key="1">
    <citation type="journal article" date="2003" name="J. Bacteriol.">
        <title>Complete genome sequence of the oral pathogenic bacterium Porphyromonas gingivalis strain W83.</title>
        <authorList>
            <person name="Nelson K.E."/>
            <person name="Fleischmann R.D."/>
            <person name="DeBoy R.T."/>
            <person name="Paulsen I.T."/>
            <person name="Fouts D.E."/>
            <person name="Eisen J.A."/>
            <person name="Daugherty S.C."/>
            <person name="Dodson R.J."/>
            <person name="Durkin A.S."/>
            <person name="Gwinn M.L."/>
            <person name="Haft D.H."/>
            <person name="Kolonay J.F."/>
            <person name="Nelson W.C."/>
            <person name="Mason T.M."/>
            <person name="Tallon L."/>
            <person name="Gray J."/>
            <person name="Granger D."/>
            <person name="Tettelin H."/>
            <person name="Dong H."/>
            <person name="Galvin J.L."/>
            <person name="Duncan M.J."/>
            <person name="Dewhirst F.E."/>
            <person name="Fraser C.M."/>
        </authorList>
    </citation>
    <scope>NUCLEOTIDE SEQUENCE [LARGE SCALE GENOMIC DNA]</scope>
    <source>
        <strain>ATCC BAA-308 / W83</strain>
    </source>
</reference>
<proteinExistence type="inferred from homology"/>
<evidence type="ECO:0000255" key="1">
    <source>
        <dbReference type="HAMAP-Rule" id="MF_01077"/>
    </source>
</evidence>
<name>RIMP_PORGI</name>
<sequence>MIDREQIVRIVSDYLSTGETFLVEVAIHPGNRILVELDSAQGVCIDECVALSRHIESQVDRDIEDYELEVGSTGLTSPLKVMRQWENCIDSELSVLLTNGMKETGRLITVAPEAIKLEVVRMVKPEGAKRKKPETQELTIVMADIKQAVRII</sequence>
<comment type="function">
    <text evidence="1">Required for maturation of 30S ribosomal subunits.</text>
</comment>
<comment type="subcellular location">
    <subcellularLocation>
        <location evidence="1">Cytoplasm</location>
    </subcellularLocation>
</comment>
<comment type="similarity">
    <text evidence="1">Belongs to the RimP family.</text>
</comment>
<gene>
    <name evidence="1" type="primary">rimP</name>
    <name type="ordered locus">PG_0253</name>
</gene>